<comment type="function">
    <text evidence="1">This b-type cytochrome is tightly associated with the reaction center of photosystem II (PSII). PSII is a light-driven water:plastoquinone oxidoreductase that uses light energy to abstract electrons from H(2)O, generating O(2) and a proton gradient subsequently used for ATP formation. It consists of a core antenna complex that captures photons, and an electron transfer chain that converts photonic excitation into a charge separation.</text>
</comment>
<comment type="cofactor">
    <cofactor evidence="1">
        <name>heme b</name>
        <dbReference type="ChEBI" id="CHEBI:60344"/>
    </cofactor>
    <text evidence="1">With its partner (PsbF) binds heme. PSII binds additional chlorophylls, carotenoids and specific lipids.</text>
</comment>
<comment type="subunit">
    <text evidence="1">Heterodimer of an alpha subunit and a beta subunit. PSII is composed of 1 copy each of membrane proteins PsbA, PsbB, PsbC, PsbD, PsbE, PsbF, PsbH, PsbI, PsbJ, PsbK, PsbL, PsbM, PsbT, PsbX, PsbY, PsbZ, Psb30/Ycf12, at least 3 peripheral proteins of the oxygen-evolving complex and a large number of cofactors. It forms dimeric complexes.</text>
</comment>
<comment type="subcellular location">
    <subcellularLocation>
        <location evidence="1">Plastid</location>
        <location evidence="1">Chloroplast thylakoid membrane</location>
        <topology evidence="1">Single-pass membrane protein</topology>
    </subcellularLocation>
</comment>
<comment type="similarity">
    <text evidence="1">Belongs to the PsbE/PsbF family.</text>
</comment>
<name>PSBE_STIHE</name>
<reference key="1">
    <citation type="journal article" date="2006" name="Mol. Genet. Genomics">
        <title>Distinctive architecture of the chloroplast genome in the chlorophycean green alga Stigeoclonium helveticum.</title>
        <authorList>
            <person name="Belanger A.-S."/>
            <person name="Brouard J.-S."/>
            <person name="Charlebois P."/>
            <person name="Otis C."/>
            <person name="Lemieux C."/>
            <person name="Turmel M."/>
        </authorList>
    </citation>
    <scope>NUCLEOTIDE SEQUENCE [LARGE SCALE GENOMIC DNA]</scope>
    <source>
        <strain>UTEX 441</strain>
    </source>
</reference>
<organism>
    <name type="scientific">Stigeoclonium helveticum</name>
    <name type="common">Green alga</name>
    <dbReference type="NCBI Taxonomy" id="55999"/>
    <lineage>
        <taxon>Eukaryota</taxon>
        <taxon>Viridiplantae</taxon>
        <taxon>Chlorophyta</taxon>
        <taxon>core chlorophytes</taxon>
        <taxon>Chlorophyceae</taxon>
        <taxon>OCC clade</taxon>
        <taxon>Chaetophorales</taxon>
        <taxon>Chaetophoraceae</taxon>
        <taxon>Stigeoclonium</taxon>
    </lineage>
</organism>
<proteinExistence type="inferred from homology"/>
<gene>
    <name evidence="1" type="primary">psbE</name>
</gene>
<feature type="chain" id="PRO_0000275719" description="Cytochrome b559 subunit alpha">
    <location>
        <begin position="1"/>
        <end position="82"/>
    </location>
</feature>
<feature type="transmembrane region" description="Helical" evidence="1">
    <location>
        <begin position="21"/>
        <end position="35"/>
    </location>
</feature>
<feature type="binding site" description="axial binding residue" evidence="1">
    <location>
        <position position="23"/>
    </location>
    <ligand>
        <name>heme</name>
        <dbReference type="ChEBI" id="CHEBI:30413"/>
        <note>ligand shared with beta subunit</note>
    </ligand>
    <ligandPart>
        <name>Fe</name>
        <dbReference type="ChEBI" id="CHEBI:18248"/>
    </ligandPart>
</feature>
<keyword id="KW-0150">Chloroplast</keyword>
<keyword id="KW-0249">Electron transport</keyword>
<keyword id="KW-0349">Heme</keyword>
<keyword id="KW-0408">Iron</keyword>
<keyword id="KW-0472">Membrane</keyword>
<keyword id="KW-0479">Metal-binding</keyword>
<keyword id="KW-0602">Photosynthesis</keyword>
<keyword id="KW-0604">Photosystem II</keyword>
<keyword id="KW-0934">Plastid</keyword>
<keyword id="KW-0793">Thylakoid</keyword>
<keyword id="KW-0812">Transmembrane</keyword>
<keyword id="KW-1133">Transmembrane helix</keyword>
<keyword id="KW-0813">Transport</keyword>
<geneLocation type="chloroplast"/>
<dbReference type="EMBL" id="DQ630521">
    <property type="protein sequence ID" value="ABF60170.1"/>
    <property type="molecule type" value="Genomic_DNA"/>
</dbReference>
<dbReference type="RefSeq" id="YP_764405.1">
    <property type="nucleotide sequence ID" value="NC_008372.1"/>
</dbReference>
<dbReference type="SMR" id="Q06SG1"/>
<dbReference type="GeneID" id="4308413"/>
<dbReference type="GO" id="GO:0009535">
    <property type="term" value="C:chloroplast thylakoid membrane"/>
    <property type="evidence" value="ECO:0007669"/>
    <property type="project" value="UniProtKB-SubCell"/>
</dbReference>
<dbReference type="GO" id="GO:0009539">
    <property type="term" value="C:photosystem II reaction center"/>
    <property type="evidence" value="ECO:0007669"/>
    <property type="project" value="InterPro"/>
</dbReference>
<dbReference type="GO" id="GO:0009055">
    <property type="term" value="F:electron transfer activity"/>
    <property type="evidence" value="ECO:0007669"/>
    <property type="project" value="UniProtKB-UniRule"/>
</dbReference>
<dbReference type="GO" id="GO:0020037">
    <property type="term" value="F:heme binding"/>
    <property type="evidence" value="ECO:0007669"/>
    <property type="project" value="InterPro"/>
</dbReference>
<dbReference type="GO" id="GO:0005506">
    <property type="term" value="F:iron ion binding"/>
    <property type="evidence" value="ECO:0007669"/>
    <property type="project" value="UniProtKB-UniRule"/>
</dbReference>
<dbReference type="GO" id="GO:0009767">
    <property type="term" value="P:photosynthetic electron transport chain"/>
    <property type="evidence" value="ECO:0007669"/>
    <property type="project" value="InterPro"/>
</dbReference>
<dbReference type="Gene3D" id="1.20.5.860">
    <property type="entry name" value="Photosystem II cytochrome b559, alpha subunit"/>
    <property type="match status" value="1"/>
</dbReference>
<dbReference type="HAMAP" id="MF_00642">
    <property type="entry name" value="PSII_PsbE"/>
    <property type="match status" value="1"/>
</dbReference>
<dbReference type="InterPro" id="IPR006217">
    <property type="entry name" value="PSII_cyt_b559_asu"/>
</dbReference>
<dbReference type="InterPro" id="IPR037025">
    <property type="entry name" value="PSII_cyt_b559_asu_sf"/>
</dbReference>
<dbReference type="InterPro" id="IPR006216">
    <property type="entry name" value="PSII_cyt_b559_CS"/>
</dbReference>
<dbReference type="InterPro" id="IPR013081">
    <property type="entry name" value="PSII_cyt_b559_N"/>
</dbReference>
<dbReference type="InterPro" id="IPR013082">
    <property type="entry name" value="PSII_cytb559_asu_lum"/>
</dbReference>
<dbReference type="NCBIfam" id="TIGR01332">
    <property type="entry name" value="cyt_b559_alpha"/>
    <property type="match status" value="1"/>
</dbReference>
<dbReference type="PANTHER" id="PTHR33391">
    <property type="entry name" value="CYTOCHROME B559 SUBUNIT BETA-RELATED"/>
    <property type="match status" value="1"/>
</dbReference>
<dbReference type="PANTHER" id="PTHR33391:SF9">
    <property type="entry name" value="CYTOCHROME B559 SUBUNIT BETA-RELATED"/>
    <property type="match status" value="1"/>
</dbReference>
<dbReference type="Pfam" id="PF00283">
    <property type="entry name" value="Cytochrom_B559"/>
    <property type="match status" value="1"/>
</dbReference>
<dbReference type="Pfam" id="PF00284">
    <property type="entry name" value="Cytochrom_B559a"/>
    <property type="match status" value="1"/>
</dbReference>
<dbReference type="PIRSF" id="PIRSF000036">
    <property type="entry name" value="PsbE"/>
    <property type="match status" value="1"/>
</dbReference>
<dbReference type="SUPFAM" id="SSF161045">
    <property type="entry name" value="Cytochrome b559 subunits"/>
    <property type="match status" value="1"/>
</dbReference>
<dbReference type="PROSITE" id="PS00537">
    <property type="entry name" value="CYTOCHROME_B559"/>
    <property type="match status" value="1"/>
</dbReference>
<evidence type="ECO:0000255" key="1">
    <source>
        <dbReference type="HAMAP-Rule" id="MF_00642"/>
    </source>
</evidence>
<sequence length="82" mass="9420">MSGKPNERPFSDIITSIRYWVIHSITIPSLFIAGWLFVSTGLAYDIFGAPRPNEYFTEDRQDAPLITDRFNALEQVKQLSQQ</sequence>
<accession>Q06SG1</accession>
<protein>
    <recommendedName>
        <fullName evidence="1">Cytochrome b559 subunit alpha</fullName>
    </recommendedName>
    <alternativeName>
        <fullName evidence="1">PSII reaction center subunit V</fullName>
    </alternativeName>
</protein>